<reference key="1">
    <citation type="journal article" date="2000" name="DNA Res.">
        <title>Structural analysis of Arabidopsis thaliana chromosome 5. X. Sequence features of the regions of 3,076,755 bp covered by sixty P1 and TAC clones.</title>
        <authorList>
            <person name="Sato S."/>
            <person name="Nakamura Y."/>
            <person name="Kaneko T."/>
            <person name="Katoh T."/>
            <person name="Asamizu E."/>
            <person name="Kotani H."/>
            <person name="Tabata S."/>
        </authorList>
    </citation>
    <scope>NUCLEOTIDE SEQUENCE [LARGE SCALE GENOMIC DNA]</scope>
    <source>
        <strain>cv. Columbia</strain>
    </source>
</reference>
<reference key="2">
    <citation type="journal article" date="2017" name="Plant J.">
        <title>Araport11: a complete reannotation of the Arabidopsis thaliana reference genome.</title>
        <authorList>
            <person name="Cheng C.Y."/>
            <person name="Krishnakumar V."/>
            <person name="Chan A.P."/>
            <person name="Thibaud-Nissen F."/>
            <person name="Schobel S."/>
            <person name="Town C.D."/>
        </authorList>
    </citation>
    <scope>GENOME REANNOTATION</scope>
    <source>
        <strain>cv. Columbia</strain>
    </source>
</reference>
<reference key="3">
    <citation type="submission" date="2004-01" db="EMBL/GenBank/DDBJ databases">
        <title>Arabidopsis ORF clones.</title>
        <authorList>
            <person name="Cheuk R.F."/>
            <person name="Chen H."/>
            <person name="Kim C.J."/>
            <person name="Shinn P."/>
            <person name="Ecker J.R."/>
        </authorList>
    </citation>
    <scope>NUCLEOTIDE SEQUENCE [LARGE SCALE MRNA]</scope>
    <source>
        <strain>cv. Columbia</strain>
    </source>
</reference>
<reference key="4">
    <citation type="submission" date="2004-12" db="EMBL/GenBank/DDBJ databases">
        <title>Arabidopsis ORF clones.</title>
        <authorList>
            <person name="Cheuk R.F."/>
            <person name="Chen H."/>
            <person name="Kim C.J."/>
            <person name="Shinn P."/>
            <person name="Ecker J.R."/>
        </authorList>
    </citation>
    <scope>NUCLEOTIDE SEQUENCE [LARGE SCALE MRNA]</scope>
    <source>
        <strain>cv. Columbia</strain>
    </source>
</reference>
<reference key="5">
    <citation type="journal article" date="2007" name="Autophagy">
        <title>ATG genes involved in non-selective autophagy are conserved from yeast to man, but the selective Cvt and pexophagy pathways also require organism-specific genes.</title>
        <authorList>
            <person name="Meijer W.H."/>
            <person name="van der Klei I.J."/>
            <person name="Veenhuis M."/>
            <person name="Kiel J.A.K.W."/>
        </authorList>
    </citation>
    <scope>GENE FAMILY</scope>
    <scope>NOMENCLATURE</scope>
</reference>
<gene>
    <name evidence="3" type="primary">ATG16</name>
    <name evidence="5" type="ordered locus">At5g50230</name>
    <name evidence="6" type="ORF">K6A12.9</name>
</gene>
<feature type="chain" id="PRO_0000434628" description="Autophagy-related protein 16">
    <location>
        <begin position="1"/>
        <end position="509"/>
    </location>
</feature>
<feature type="repeat" description="WD 1" evidence="2">
    <location>
        <begin position="223"/>
        <end position="262"/>
    </location>
</feature>
<feature type="repeat" description="WD 2" evidence="2">
    <location>
        <begin position="265"/>
        <end position="304"/>
    </location>
</feature>
<feature type="repeat" description="WD 3" evidence="2">
    <location>
        <begin position="307"/>
        <end position="347"/>
    </location>
</feature>
<feature type="repeat" description="WD 4" evidence="2">
    <location>
        <begin position="349"/>
        <end position="388"/>
    </location>
</feature>
<feature type="repeat" description="WD 5" evidence="2">
    <location>
        <begin position="391"/>
        <end position="430"/>
    </location>
</feature>
<feature type="repeat" description="WD 6" evidence="2">
    <location>
        <begin position="437"/>
        <end position="478"/>
    </location>
</feature>
<feature type="repeat" description="WD 7" evidence="2">
    <location>
        <begin position="480"/>
        <end position="509"/>
    </location>
</feature>
<comment type="function">
    <text evidence="1">May play a role in autophagy.</text>
</comment>
<comment type="interaction">
    <interactant intactId="EBI-25517622">
        <id>Q6NNP0</id>
    </interactant>
    <interactant intactId="EBI-4426557">
        <id>Q84MB2</id>
        <label>TIFY8</label>
    </interactant>
    <organismsDiffer>false</organismsDiffer>
    <experiments>3</experiments>
</comment>
<comment type="interaction">
    <interactant intactId="EBI-25517622">
        <id>Q6NNP0</id>
    </interactant>
    <interactant intactId="EBI-15193683">
        <id>Q5CCK4</id>
        <label>VAL2</label>
    </interactant>
    <organismsDiffer>false</organismsDiffer>
    <experiments>3</experiments>
</comment>
<comment type="similarity">
    <text evidence="4">Belongs to the WD repeat ATG16 family.</text>
</comment>
<comment type="sequence caution" evidence="4">
    <conflict type="erroneous gene model prediction">
        <sequence resource="EMBL-CDS" id="BAB09394"/>
    </conflict>
</comment>
<organism>
    <name type="scientific">Arabidopsis thaliana</name>
    <name type="common">Mouse-ear cress</name>
    <dbReference type="NCBI Taxonomy" id="3702"/>
    <lineage>
        <taxon>Eukaryota</taxon>
        <taxon>Viridiplantae</taxon>
        <taxon>Streptophyta</taxon>
        <taxon>Embryophyta</taxon>
        <taxon>Tracheophyta</taxon>
        <taxon>Spermatophyta</taxon>
        <taxon>Magnoliopsida</taxon>
        <taxon>eudicotyledons</taxon>
        <taxon>Gunneridae</taxon>
        <taxon>Pentapetalae</taxon>
        <taxon>rosids</taxon>
        <taxon>malvids</taxon>
        <taxon>Brassicales</taxon>
        <taxon>Brassicaceae</taxon>
        <taxon>Camelineae</taxon>
        <taxon>Arabidopsis</taxon>
    </lineage>
</organism>
<accession>Q6NNP0</accession>
<accession>Q9FGS2</accession>
<keyword id="KW-0072">Autophagy</keyword>
<keyword id="KW-0653">Protein transport</keyword>
<keyword id="KW-1185">Reference proteome</keyword>
<keyword id="KW-0677">Repeat</keyword>
<keyword id="KW-0813">Transport</keyword>
<keyword id="KW-0853">WD repeat</keyword>
<protein>
    <recommendedName>
        <fullName evidence="4">Autophagy-related protein 16</fullName>
    </recommendedName>
</protein>
<sequence>MVQEEKAMEAINDALRALRKRHLLEEGAHAPAISALSKPLISQGSEWKEKTEKLETELQQCYKAQSRLSEQLVIEVAESRTSKAILQEKELLINDLQKELTQRREDCTRLQEELEEKTKTVDVLIAENLEIRSQLEEMTSRVQKAETENKMLIDRWMLQKMQDAERLNEANDLYEEMLAKLKANGLETLARQQVDGIVRRNEDGTDHFVESTIPSTCANRIHAHEGGCGSIVFEYNSGTLFTGGQDRAVKMWDTNSGTLIKSLYGSLGNILDMAVTHDNKSVIAATSSNNLFVWDVSSGRVRHTLTGHTDKVCAVDVSKFSSRHVVSAAYDRTIKLWDLHKGYCTNTVLFTSNCNAICLSIDGLTVFSGHMDGNLRLWDIQTGKLLSEVAGHSSAVTSVSLSRNGNRILTSGRDNVHNVFDTRTLEICGTLRASGNRLASNWSRSCISPDDDYVAAGSADGSVHVWSLSKGNIVSILKEQTSPILCCSWSGIGKPLASADKNGYVCTWT</sequence>
<name>ATG16_ARATH</name>
<evidence type="ECO:0000250" key="1">
    <source>
        <dbReference type="UniProtKB" id="Q676U5"/>
    </source>
</evidence>
<evidence type="ECO:0000255" key="2"/>
<evidence type="ECO:0000303" key="3">
    <source>
    </source>
</evidence>
<evidence type="ECO:0000305" key="4"/>
<evidence type="ECO:0000312" key="5">
    <source>
        <dbReference type="Araport" id="AT5G50230"/>
    </source>
</evidence>
<evidence type="ECO:0000312" key="6">
    <source>
        <dbReference type="EMBL" id="BAB09394.1"/>
    </source>
</evidence>
<proteinExistence type="evidence at protein level"/>
<dbReference type="EMBL" id="AB024031">
    <property type="protein sequence ID" value="BAB09394.1"/>
    <property type="status" value="ALT_SEQ"/>
    <property type="molecule type" value="Genomic_DNA"/>
</dbReference>
<dbReference type="EMBL" id="CP002688">
    <property type="protein sequence ID" value="AED95914.1"/>
    <property type="molecule type" value="Genomic_DNA"/>
</dbReference>
<dbReference type="EMBL" id="BT011244">
    <property type="protein sequence ID" value="AAR92280.1"/>
    <property type="molecule type" value="mRNA"/>
</dbReference>
<dbReference type="EMBL" id="BT020329">
    <property type="protein sequence ID" value="AAV85684.1"/>
    <property type="molecule type" value="mRNA"/>
</dbReference>
<dbReference type="RefSeq" id="NP_199834.2">
    <property type="nucleotide sequence ID" value="NM_124402.4"/>
</dbReference>
<dbReference type="SMR" id="Q6NNP0"/>
<dbReference type="FunCoup" id="Q6NNP0">
    <property type="interactions" value="3223"/>
</dbReference>
<dbReference type="IntAct" id="Q6NNP0">
    <property type="interactions" value="2"/>
</dbReference>
<dbReference type="STRING" id="3702.Q6NNP0"/>
<dbReference type="PaxDb" id="3702-AT5G50230.1"/>
<dbReference type="ProteomicsDB" id="246545"/>
<dbReference type="EnsemblPlants" id="AT5G50230.1">
    <property type="protein sequence ID" value="AT5G50230.1"/>
    <property type="gene ID" value="AT5G50230"/>
</dbReference>
<dbReference type="GeneID" id="835088"/>
<dbReference type="Gramene" id="AT5G50230.1">
    <property type="protein sequence ID" value="AT5G50230.1"/>
    <property type="gene ID" value="AT5G50230"/>
</dbReference>
<dbReference type="KEGG" id="ath:AT5G50230"/>
<dbReference type="Araport" id="AT5G50230"/>
<dbReference type="TAIR" id="AT5G50230">
    <property type="gene designation" value="ATG16"/>
</dbReference>
<dbReference type="eggNOG" id="KOG0288">
    <property type="taxonomic scope" value="Eukaryota"/>
</dbReference>
<dbReference type="HOGENOM" id="CLU_000288_57_10_1"/>
<dbReference type="InParanoid" id="Q6NNP0"/>
<dbReference type="OMA" id="WGRPCIS"/>
<dbReference type="PhylomeDB" id="Q6NNP0"/>
<dbReference type="PRO" id="PR:Q6NNP0"/>
<dbReference type="Proteomes" id="UP000006548">
    <property type="component" value="Chromosome 5"/>
</dbReference>
<dbReference type="ExpressionAtlas" id="Q6NNP0">
    <property type="expression patterns" value="baseline and differential"/>
</dbReference>
<dbReference type="GO" id="GO:0000045">
    <property type="term" value="P:autophagosome assembly"/>
    <property type="evidence" value="ECO:0007669"/>
    <property type="project" value="InterPro"/>
</dbReference>
<dbReference type="GO" id="GO:0015031">
    <property type="term" value="P:protein transport"/>
    <property type="evidence" value="ECO:0007669"/>
    <property type="project" value="UniProtKB-KW"/>
</dbReference>
<dbReference type="CDD" id="cd22887">
    <property type="entry name" value="Atg16_CCD"/>
    <property type="match status" value="1"/>
</dbReference>
<dbReference type="CDD" id="cd00200">
    <property type="entry name" value="WD40"/>
    <property type="match status" value="1"/>
</dbReference>
<dbReference type="FunFam" id="2.130.10.10:FF:003347">
    <property type="entry name" value="Autophagy-related protein 16"/>
    <property type="match status" value="1"/>
</dbReference>
<dbReference type="Gene3D" id="1.20.5.170">
    <property type="match status" value="1"/>
</dbReference>
<dbReference type="Gene3D" id="2.130.10.10">
    <property type="entry name" value="YVTN repeat-like/Quinoprotein amine dehydrogenase"/>
    <property type="match status" value="3"/>
</dbReference>
<dbReference type="InterPro" id="IPR045160">
    <property type="entry name" value="ATG16"/>
</dbReference>
<dbReference type="InterPro" id="IPR013923">
    <property type="entry name" value="Autophagy-rel_prot_16_dom"/>
</dbReference>
<dbReference type="InterPro" id="IPR020472">
    <property type="entry name" value="G-protein_beta_WD-40_rep"/>
</dbReference>
<dbReference type="InterPro" id="IPR015943">
    <property type="entry name" value="WD40/YVTN_repeat-like_dom_sf"/>
</dbReference>
<dbReference type="InterPro" id="IPR019775">
    <property type="entry name" value="WD40_repeat_CS"/>
</dbReference>
<dbReference type="InterPro" id="IPR036322">
    <property type="entry name" value="WD40_repeat_dom_sf"/>
</dbReference>
<dbReference type="InterPro" id="IPR001680">
    <property type="entry name" value="WD40_rpt"/>
</dbReference>
<dbReference type="PANTHER" id="PTHR19878">
    <property type="entry name" value="AUTOPHAGY PROTEIN 16-LIKE"/>
    <property type="match status" value="1"/>
</dbReference>
<dbReference type="PANTHER" id="PTHR19878:SF8">
    <property type="entry name" value="AUTOPHAGY-RELATED 16, ISOFORM F"/>
    <property type="match status" value="1"/>
</dbReference>
<dbReference type="Pfam" id="PF08614">
    <property type="entry name" value="ATG16"/>
    <property type="match status" value="1"/>
</dbReference>
<dbReference type="Pfam" id="PF00400">
    <property type="entry name" value="WD40"/>
    <property type="match status" value="5"/>
</dbReference>
<dbReference type="PRINTS" id="PR00320">
    <property type="entry name" value="GPROTEINBRPT"/>
</dbReference>
<dbReference type="SMART" id="SM00320">
    <property type="entry name" value="WD40"/>
    <property type="match status" value="7"/>
</dbReference>
<dbReference type="SUPFAM" id="SSF50978">
    <property type="entry name" value="WD40 repeat-like"/>
    <property type="match status" value="1"/>
</dbReference>
<dbReference type="PROSITE" id="PS00678">
    <property type="entry name" value="WD_REPEATS_1"/>
    <property type="match status" value="3"/>
</dbReference>
<dbReference type="PROSITE" id="PS50082">
    <property type="entry name" value="WD_REPEATS_2"/>
    <property type="match status" value="6"/>
</dbReference>
<dbReference type="PROSITE" id="PS50294">
    <property type="entry name" value="WD_REPEATS_REGION"/>
    <property type="match status" value="1"/>
</dbReference>